<protein>
    <recommendedName>
        <fullName evidence="1">Large ribosomal subunit protein bL36</fullName>
    </recommendedName>
    <alternativeName>
        <fullName evidence="2">50S ribosomal protein L36</fullName>
    </alternativeName>
</protein>
<evidence type="ECO:0000255" key="1">
    <source>
        <dbReference type="HAMAP-Rule" id="MF_00251"/>
    </source>
</evidence>
<evidence type="ECO:0000305" key="2"/>
<gene>
    <name evidence="1" type="primary">rpmJ</name>
    <name type="ordered locus">SAR11_0573</name>
</gene>
<reference key="1">
    <citation type="journal article" date="2005" name="Science">
        <title>Genome streamlining in a cosmopolitan oceanic bacterium.</title>
        <authorList>
            <person name="Giovannoni S.J."/>
            <person name="Tripp H.J."/>
            <person name="Givan S."/>
            <person name="Podar M."/>
            <person name="Vergin K.L."/>
            <person name="Baptista D."/>
            <person name="Bibbs L."/>
            <person name="Eads J."/>
            <person name="Richardson T.H."/>
            <person name="Noordewier M."/>
            <person name="Rappe M.S."/>
            <person name="Short J.M."/>
            <person name="Carrington J.C."/>
            <person name="Mathur E.J."/>
        </authorList>
    </citation>
    <scope>NUCLEOTIDE SEQUENCE [LARGE SCALE GENOMIC DNA]</scope>
    <source>
        <strain>HTCC1062</strain>
    </source>
</reference>
<organism>
    <name type="scientific">Pelagibacter ubique (strain HTCC1062)</name>
    <dbReference type="NCBI Taxonomy" id="335992"/>
    <lineage>
        <taxon>Bacteria</taxon>
        <taxon>Pseudomonadati</taxon>
        <taxon>Pseudomonadota</taxon>
        <taxon>Alphaproteobacteria</taxon>
        <taxon>Candidatus Pelagibacterales</taxon>
        <taxon>Candidatus Pelagibacteraceae</taxon>
        <taxon>Candidatus Pelagibacter</taxon>
    </lineage>
</organism>
<dbReference type="EMBL" id="CP000084">
    <property type="protein sequence ID" value="AAZ21394.1"/>
    <property type="molecule type" value="Genomic_DNA"/>
</dbReference>
<dbReference type="SMR" id="Q4FN45"/>
<dbReference type="STRING" id="335992.SAR11_0573"/>
<dbReference type="GeneID" id="66295077"/>
<dbReference type="KEGG" id="pub:SAR11_0573"/>
<dbReference type="eggNOG" id="COG0257">
    <property type="taxonomic scope" value="Bacteria"/>
</dbReference>
<dbReference type="HOGENOM" id="CLU_135723_3_2_5"/>
<dbReference type="Proteomes" id="UP000002528">
    <property type="component" value="Chromosome"/>
</dbReference>
<dbReference type="GO" id="GO:1990904">
    <property type="term" value="C:ribonucleoprotein complex"/>
    <property type="evidence" value="ECO:0007669"/>
    <property type="project" value="UniProtKB-KW"/>
</dbReference>
<dbReference type="GO" id="GO:0005840">
    <property type="term" value="C:ribosome"/>
    <property type="evidence" value="ECO:0007669"/>
    <property type="project" value="UniProtKB-KW"/>
</dbReference>
<dbReference type="GO" id="GO:0003735">
    <property type="term" value="F:structural constituent of ribosome"/>
    <property type="evidence" value="ECO:0007669"/>
    <property type="project" value="InterPro"/>
</dbReference>
<dbReference type="GO" id="GO:0006412">
    <property type="term" value="P:translation"/>
    <property type="evidence" value="ECO:0007669"/>
    <property type="project" value="UniProtKB-UniRule"/>
</dbReference>
<dbReference type="HAMAP" id="MF_00251">
    <property type="entry name" value="Ribosomal_bL36"/>
    <property type="match status" value="1"/>
</dbReference>
<dbReference type="InterPro" id="IPR000473">
    <property type="entry name" value="Ribosomal_bL36"/>
</dbReference>
<dbReference type="InterPro" id="IPR035977">
    <property type="entry name" value="Ribosomal_bL36_sp"/>
</dbReference>
<dbReference type="InterPro" id="IPR047621">
    <property type="entry name" value="Ribosomal_L36_bact"/>
</dbReference>
<dbReference type="NCBIfam" id="NF002021">
    <property type="entry name" value="PRK00831.1"/>
    <property type="match status" value="1"/>
</dbReference>
<dbReference type="NCBIfam" id="TIGR01022">
    <property type="entry name" value="rpmJ_bact"/>
    <property type="match status" value="1"/>
</dbReference>
<dbReference type="PANTHER" id="PTHR47781">
    <property type="entry name" value="50S RIBOSOMAL PROTEIN L36 2"/>
    <property type="match status" value="1"/>
</dbReference>
<dbReference type="PANTHER" id="PTHR47781:SF1">
    <property type="entry name" value="LARGE RIBOSOMAL SUBUNIT PROTEIN BL36B"/>
    <property type="match status" value="1"/>
</dbReference>
<dbReference type="Pfam" id="PF00444">
    <property type="entry name" value="Ribosomal_L36"/>
    <property type="match status" value="1"/>
</dbReference>
<dbReference type="SUPFAM" id="SSF57840">
    <property type="entry name" value="Ribosomal protein L36"/>
    <property type="match status" value="1"/>
</dbReference>
<proteinExistence type="inferred from homology"/>
<comment type="similarity">
    <text evidence="1">Belongs to the bacterial ribosomal protein bL36 family.</text>
</comment>
<keyword id="KW-1185">Reference proteome</keyword>
<keyword id="KW-0687">Ribonucleoprotein</keyword>
<keyword id="KW-0689">Ribosomal protein</keyword>
<sequence length="41" mass="4929">MKIKSSLKSLKKRDLNSKLVRRRGRVYIINKTNPKFKARQK</sequence>
<name>RL36_PELUB</name>
<accession>Q4FN45</accession>
<feature type="chain" id="PRO_0000302262" description="Large ribosomal subunit protein bL36">
    <location>
        <begin position="1"/>
        <end position="41"/>
    </location>
</feature>